<accession>Q11VI6</accession>
<dbReference type="EC" id="3.6.1.9" evidence="1"/>
<dbReference type="EMBL" id="CP000383">
    <property type="protein sequence ID" value="ABG58580.1"/>
    <property type="molecule type" value="Genomic_DNA"/>
</dbReference>
<dbReference type="RefSeq" id="WP_011584695.1">
    <property type="nucleotide sequence ID" value="NC_008255.1"/>
</dbReference>
<dbReference type="SMR" id="Q11VI6"/>
<dbReference type="STRING" id="269798.CHU_1308"/>
<dbReference type="KEGG" id="chu:CHU_1308"/>
<dbReference type="eggNOG" id="COG0424">
    <property type="taxonomic scope" value="Bacteria"/>
</dbReference>
<dbReference type="HOGENOM" id="CLU_040416_0_0_10"/>
<dbReference type="OrthoDB" id="9807767at2"/>
<dbReference type="Proteomes" id="UP000001822">
    <property type="component" value="Chromosome"/>
</dbReference>
<dbReference type="GO" id="GO:0005737">
    <property type="term" value="C:cytoplasm"/>
    <property type="evidence" value="ECO:0007669"/>
    <property type="project" value="UniProtKB-SubCell"/>
</dbReference>
<dbReference type="GO" id="GO:0036218">
    <property type="term" value="F:dTTP diphosphatase activity"/>
    <property type="evidence" value="ECO:0007669"/>
    <property type="project" value="RHEA"/>
</dbReference>
<dbReference type="GO" id="GO:0036221">
    <property type="term" value="F:UTP diphosphatase activity"/>
    <property type="evidence" value="ECO:0007669"/>
    <property type="project" value="RHEA"/>
</dbReference>
<dbReference type="GO" id="GO:0009117">
    <property type="term" value="P:nucleotide metabolic process"/>
    <property type="evidence" value="ECO:0007669"/>
    <property type="project" value="UniProtKB-KW"/>
</dbReference>
<dbReference type="CDD" id="cd00555">
    <property type="entry name" value="Maf"/>
    <property type="match status" value="1"/>
</dbReference>
<dbReference type="Gene3D" id="3.90.950.10">
    <property type="match status" value="1"/>
</dbReference>
<dbReference type="HAMAP" id="MF_00528">
    <property type="entry name" value="Maf"/>
    <property type="match status" value="1"/>
</dbReference>
<dbReference type="InterPro" id="IPR029001">
    <property type="entry name" value="ITPase-like_fam"/>
</dbReference>
<dbReference type="InterPro" id="IPR003697">
    <property type="entry name" value="Maf-like"/>
</dbReference>
<dbReference type="NCBIfam" id="TIGR00172">
    <property type="entry name" value="maf"/>
    <property type="match status" value="1"/>
</dbReference>
<dbReference type="PANTHER" id="PTHR43213">
    <property type="entry name" value="BIFUNCTIONAL DTTP/UTP PYROPHOSPHATASE/METHYLTRANSFERASE PROTEIN-RELATED"/>
    <property type="match status" value="1"/>
</dbReference>
<dbReference type="PANTHER" id="PTHR43213:SF5">
    <property type="entry name" value="BIFUNCTIONAL DTTP_UTP PYROPHOSPHATASE_METHYLTRANSFERASE PROTEIN-RELATED"/>
    <property type="match status" value="1"/>
</dbReference>
<dbReference type="Pfam" id="PF02545">
    <property type="entry name" value="Maf"/>
    <property type="match status" value="1"/>
</dbReference>
<dbReference type="PIRSF" id="PIRSF006305">
    <property type="entry name" value="Maf"/>
    <property type="match status" value="1"/>
</dbReference>
<dbReference type="SUPFAM" id="SSF52972">
    <property type="entry name" value="ITPase-like"/>
    <property type="match status" value="1"/>
</dbReference>
<name>NTPPA_CYTH3</name>
<organism>
    <name type="scientific">Cytophaga hutchinsonii (strain ATCC 33406 / DSM 1761 / CIP 103989 / NBRC 15051 / NCIMB 9469 / D465)</name>
    <dbReference type="NCBI Taxonomy" id="269798"/>
    <lineage>
        <taxon>Bacteria</taxon>
        <taxon>Pseudomonadati</taxon>
        <taxon>Bacteroidota</taxon>
        <taxon>Cytophagia</taxon>
        <taxon>Cytophagales</taxon>
        <taxon>Cytophagaceae</taxon>
        <taxon>Cytophaga</taxon>
    </lineage>
</organism>
<protein>
    <recommendedName>
        <fullName evidence="1">dTTP/UTP pyrophosphatase</fullName>
        <shortName evidence="1">dTTPase/UTPase</shortName>
        <ecNumber evidence="1">3.6.1.9</ecNumber>
    </recommendedName>
    <alternativeName>
        <fullName evidence="1">Nucleoside triphosphate pyrophosphatase</fullName>
    </alternativeName>
    <alternativeName>
        <fullName evidence="1">Nucleotide pyrophosphatase</fullName>
        <shortName evidence="1">Nucleotide PPase</shortName>
    </alternativeName>
</protein>
<keyword id="KW-0963">Cytoplasm</keyword>
<keyword id="KW-0378">Hydrolase</keyword>
<keyword id="KW-0546">Nucleotide metabolism</keyword>
<keyword id="KW-1185">Reference proteome</keyword>
<evidence type="ECO:0000255" key="1">
    <source>
        <dbReference type="HAMAP-Rule" id="MF_00528"/>
    </source>
</evidence>
<proteinExistence type="inferred from homology"/>
<reference key="1">
    <citation type="journal article" date="2007" name="Appl. Environ. Microbiol.">
        <title>Genome sequence of the cellulolytic gliding bacterium Cytophaga hutchinsonii.</title>
        <authorList>
            <person name="Xie G."/>
            <person name="Bruce D.C."/>
            <person name="Challacombe J.F."/>
            <person name="Chertkov O."/>
            <person name="Detter J.C."/>
            <person name="Gilna P."/>
            <person name="Han C.S."/>
            <person name="Lucas S."/>
            <person name="Misra M."/>
            <person name="Myers G.L."/>
            <person name="Richardson P."/>
            <person name="Tapia R."/>
            <person name="Thayer N."/>
            <person name="Thompson L.S."/>
            <person name="Brettin T.S."/>
            <person name="Henrissat B."/>
            <person name="Wilson D.B."/>
            <person name="McBride M.J."/>
        </authorList>
    </citation>
    <scope>NUCLEOTIDE SEQUENCE [LARGE SCALE GENOMIC DNA]</scope>
    <source>
        <strain>ATCC 33406 / DSM 1761 / JCM 20678 / CIP 103989 / IAM 12607 / NBRC 15051 / NCIMB 9469 / D465</strain>
    </source>
</reference>
<comment type="function">
    <text evidence="1">Nucleoside triphosphate pyrophosphatase that hydrolyzes dTTP and UTP. May have a dual role in cell division arrest and in preventing the incorporation of modified nucleotides into cellular nucleic acids.</text>
</comment>
<comment type="catalytic activity">
    <reaction evidence="1">
        <text>dTTP + H2O = dTMP + diphosphate + H(+)</text>
        <dbReference type="Rhea" id="RHEA:28534"/>
        <dbReference type="ChEBI" id="CHEBI:15377"/>
        <dbReference type="ChEBI" id="CHEBI:15378"/>
        <dbReference type="ChEBI" id="CHEBI:33019"/>
        <dbReference type="ChEBI" id="CHEBI:37568"/>
        <dbReference type="ChEBI" id="CHEBI:63528"/>
        <dbReference type="EC" id="3.6.1.9"/>
    </reaction>
</comment>
<comment type="catalytic activity">
    <reaction evidence="1">
        <text>UTP + H2O = UMP + diphosphate + H(+)</text>
        <dbReference type="Rhea" id="RHEA:29395"/>
        <dbReference type="ChEBI" id="CHEBI:15377"/>
        <dbReference type="ChEBI" id="CHEBI:15378"/>
        <dbReference type="ChEBI" id="CHEBI:33019"/>
        <dbReference type="ChEBI" id="CHEBI:46398"/>
        <dbReference type="ChEBI" id="CHEBI:57865"/>
        <dbReference type="EC" id="3.6.1.9"/>
    </reaction>
</comment>
<comment type="cofactor">
    <cofactor evidence="1">
        <name>a divalent metal cation</name>
        <dbReference type="ChEBI" id="CHEBI:60240"/>
    </cofactor>
</comment>
<comment type="subcellular location">
    <subcellularLocation>
        <location evidence="1">Cytoplasm</location>
    </subcellularLocation>
</comment>
<comment type="similarity">
    <text evidence="1">Belongs to the Maf family. YhdE subfamily.</text>
</comment>
<feature type="chain" id="PRO_0000267292" description="dTTP/UTP pyrophosphatase">
    <location>
        <begin position="1"/>
        <end position="218"/>
    </location>
</feature>
<feature type="active site" description="Proton acceptor" evidence="1">
    <location>
        <position position="76"/>
    </location>
</feature>
<feature type="site" description="Important for substrate specificity" evidence="1">
    <location>
        <position position="19"/>
    </location>
</feature>
<feature type="site" description="Important for substrate specificity" evidence="1">
    <location>
        <position position="77"/>
    </location>
</feature>
<feature type="site" description="Important for substrate specificity" evidence="1">
    <location>
        <position position="159"/>
    </location>
</feature>
<sequence length="218" mass="25196">MFINHLHNTDIILASGSPRRKQLLEDAGINFRIHTKNVEENYPVYLQRSEIPLYLSKIKAHAVKADFPDSLIIAADTIVVQRRDVFNKPGSAEEAKDMLRKLSNNMHEVITGVTICYGEKERSFYDITEVFFKPLSETYINYYIENHKPFDKAGAYGIQEWLGMVGIKKIQGDFYNVMGLPVSKLIDELEKMFNPELELNQINSNRPEEPNKYLYFGI</sequence>
<gene>
    <name type="ordered locus">CHU_1308</name>
</gene>